<proteinExistence type="evidence at protein level"/>
<sequence>MSSLVRRIISTAKAPAAIGPYSQAVLVDRTIYISGQLGMDPASGQLVPGGVVEEAKQALTNIGEILKAAGCDFTNVVKATVLLADINDFSAVNDVYKQYFQSSFPARAAYQVAALPKGGRVEIEAIAVQGPLTTASL</sequence>
<accession>P80601</accession>
<accession>O97509</accession>
<protein>
    <recommendedName>
        <fullName evidence="1">2-iminobutanoate/2-iminopropanoate deaminase</fullName>
        <ecNumber evidence="1">3.5.99.10</ecNumber>
    </recommendedName>
    <alternativeName>
        <fullName evidence="8">14.3 kDa perchloric acid soluble protein</fullName>
    </alternativeName>
    <alternativeName>
        <fullName evidence="2">Translation inhibitor L-PSP ribonuclease</fullName>
        <ecNumber evidence="2">3.1.-.-</ecNumber>
    </alternativeName>
    <alternativeName>
        <fullName evidence="6">UK114 antigen</fullName>
    </alternativeName>
</protein>
<dbReference type="EC" id="3.5.99.10" evidence="1"/>
<dbReference type="EC" id="3.1.-.-" evidence="2"/>
<dbReference type="EMBL" id="AF000167">
    <property type="protein sequence ID" value="AAC72281.1"/>
    <property type="molecule type" value="mRNA"/>
</dbReference>
<dbReference type="PIR" id="S74181">
    <property type="entry name" value="S74181"/>
</dbReference>
<dbReference type="RefSeq" id="NP_001272642.1">
    <property type="nucleotide sequence ID" value="NM_001285713.1"/>
</dbReference>
<dbReference type="PDB" id="1NQ3">
    <property type="method" value="X-ray"/>
    <property type="resolution" value="2.20 A"/>
    <property type="chains" value="A/B/C/D/E/F=2-137"/>
</dbReference>
<dbReference type="PDB" id="8Q3H">
    <property type="method" value="X-ray"/>
    <property type="resolution" value="1.57 A"/>
    <property type="chains" value="A/B=1-137"/>
</dbReference>
<dbReference type="PDB" id="8QOK">
    <property type="method" value="X-ray"/>
    <property type="resolution" value="1.20 A"/>
    <property type="chains" value="A/B=1-137"/>
</dbReference>
<dbReference type="PDB" id="8QOM">
    <property type="method" value="X-ray"/>
    <property type="resolution" value="1.65 A"/>
    <property type="chains" value="A/B=1-137"/>
</dbReference>
<dbReference type="PDB" id="8QOP">
    <property type="method" value="X-ray"/>
    <property type="resolution" value="1.40 A"/>
    <property type="chains" value="A/B=1-137"/>
</dbReference>
<dbReference type="PDB" id="8QOQ">
    <property type="method" value="X-ray"/>
    <property type="resolution" value="1.21 A"/>
    <property type="chains" value="A/B=1-137"/>
</dbReference>
<dbReference type="PDB" id="8QOS">
    <property type="method" value="X-ray"/>
    <property type="resolution" value="2.01 A"/>
    <property type="chains" value="A/B/C/D/E/F=1-137"/>
</dbReference>
<dbReference type="PDB" id="8QOU">
    <property type="method" value="X-ray"/>
    <property type="resolution" value="1.40 A"/>
    <property type="chains" value="A/B=1-137"/>
</dbReference>
<dbReference type="PDB" id="8QOV">
    <property type="method" value="X-ray"/>
    <property type="resolution" value="1.60 A"/>
    <property type="chains" value="A/B=1-137"/>
</dbReference>
<dbReference type="PDBsum" id="1NQ3"/>
<dbReference type="PDBsum" id="8Q3H"/>
<dbReference type="PDBsum" id="8QOK"/>
<dbReference type="PDBsum" id="8QOM"/>
<dbReference type="PDBsum" id="8QOP"/>
<dbReference type="PDBsum" id="8QOQ"/>
<dbReference type="PDBsum" id="8QOS"/>
<dbReference type="PDBsum" id="8QOU"/>
<dbReference type="PDBsum" id="8QOV"/>
<dbReference type="SMR" id="P80601"/>
<dbReference type="STRING" id="9925.ENSCHIP00000009683"/>
<dbReference type="iPTMnet" id="P80601"/>
<dbReference type="Ensembl" id="ENSCHIT00000017456.1">
    <property type="protein sequence ID" value="ENSCHIP00000009683.1"/>
    <property type="gene ID" value="ENSCHIG00000012463.1"/>
</dbReference>
<dbReference type="Ensembl" id="ENSCHIT00020027734">
    <property type="protein sequence ID" value="ENSCHIP00020020474"/>
    <property type="gene ID" value="ENSCHIG00020013409"/>
</dbReference>
<dbReference type="Ensembl" id="ENSCHIT00040021193">
    <property type="protein sequence ID" value="ENSCHIP00040016278"/>
    <property type="gene ID" value="ENSCHIG00040009701"/>
</dbReference>
<dbReference type="GeneID" id="100861379"/>
<dbReference type="KEGG" id="chx:100861379"/>
<dbReference type="CTD" id="10247"/>
<dbReference type="GeneTree" id="ENSGT00420000029792"/>
<dbReference type="OMA" id="GSYFKEP"/>
<dbReference type="OrthoDB" id="309640at2759"/>
<dbReference type="EvolutionaryTrace" id="P80601"/>
<dbReference type="Proteomes" id="UP000291000">
    <property type="component" value="Chromosome 14"/>
</dbReference>
<dbReference type="Proteomes" id="UP000694566">
    <property type="component" value="Unplaced"/>
</dbReference>
<dbReference type="Bgee" id="ENSCHIG00000012463">
    <property type="expression patterns" value="Expressed in adult mammalian kidney and 17 other cell types or tissues"/>
</dbReference>
<dbReference type="GO" id="GO:0005829">
    <property type="term" value="C:cytosol"/>
    <property type="evidence" value="ECO:0007669"/>
    <property type="project" value="TreeGrafter"/>
</dbReference>
<dbReference type="GO" id="GO:0005759">
    <property type="term" value="C:mitochondrial matrix"/>
    <property type="evidence" value="ECO:0000250"/>
    <property type="project" value="UniProtKB"/>
</dbReference>
<dbReference type="GO" id="GO:0005634">
    <property type="term" value="C:nucleus"/>
    <property type="evidence" value="ECO:0007669"/>
    <property type="project" value="UniProtKB-SubCell"/>
</dbReference>
<dbReference type="GO" id="GO:0005777">
    <property type="term" value="C:peroxisome"/>
    <property type="evidence" value="ECO:0000250"/>
    <property type="project" value="UniProtKB"/>
</dbReference>
<dbReference type="GO" id="GO:0120242">
    <property type="term" value="F:2-iminobutanoate deaminase activity"/>
    <property type="evidence" value="ECO:0007669"/>
    <property type="project" value="RHEA"/>
</dbReference>
<dbReference type="GO" id="GO:0120243">
    <property type="term" value="F:2-iminopropanoate deaminase activity"/>
    <property type="evidence" value="ECO:0007669"/>
    <property type="project" value="RHEA"/>
</dbReference>
<dbReference type="GO" id="GO:0003729">
    <property type="term" value="F:mRNA binding"/>
    <property type="evidence" value="ECO:0000250"/>
    <property type="project" value="UniProtKB"/>
</dbReference>
<dbReference type="GO" id="GO:0016892">
    <property type="term" value="F:RNA endonuclease activity, producing 3'-phosphomonoesters"/>
    <property type="evidence" value="ECO:0000250"/>
    <property type="project" value="UniProtKB"/>
</dbReference>
<dbReference type="GO" id="GO:0006629">
    <property type="term" value="P:lipid metabolic process"/>
    <property type="evidence" value="ECO:0007669"/>
    <property type="project" value="UniProtKB-KW"/>
</dbReference>
<dbReference type="GO" id="GO:0006402">
    <property type="term" value="P:mRNA catabolic process"/>
    <property type="evidence" value="ECO:0000250"/>
    <property type="project" value="UniProtKB"/>
</dbReference>
<dbReference type="GO" id="GO:0061157">
    <property type="term" value="P:mRNA destabilization"/>
    <property type="evidence" value="ECO:0000250"/>
    <property type="project" value="UniProtKB"/>
</dbReference>
<dbReference type="GO" id="GO:0017148">
    <property type="term" value="P:negative regulation of translation"/>
    <property type="evidence" value="ECO:0000250"/>
    <property type="project" value="UniProtKB"/>
</dbReference>
<dbReference type="CDD" id="cd00448">
    <property type="entry name" value="YjgF_YER057c_UK114_family"/>
    <property type="match status" value="1"/>
</dbReference>
<dbReference type="FunFam" id="3.30.1330.40:FF:000008">
    <property type="entry name" value="ribonuclease UK114 isoform X2"/>
    <property type="match status" value="1"/>
</dbReference>
<dbReference type="Gene3D" id="3.30.1330.40">
    <property type="entry name" value="RutC-like"/>
    <property type="match status" value="1"/>
</dbReference>
<dbReference type="InterPro" id="IPR006056">
    <property type="entry name" value="RidA"/>
</dbReference>
<dbReference type="InterPro" id="IPR019897">
    <property type="entry name" value="RidA_CS"/>
</dbReference>
<dbReference type="InterPro" id="IPR035959">
    <property type="entry name" value="RutC-like_sf"/>
</dbReference>
<dbReference type="InterPro" id="IPR006175">
    <property type="entry name" value="YjgF/YER057c/UK114"/>
</dbReference>
<dbReference type="NCBIfam" id="TIGR00004">
    <property type="entry name" value="Rid family detoxifying hydrolase"/>
    <property type="match status" value="1"/>
</dbReference>
<dbReference type="PANTHER" id="PTHR11803">
    <property type="entry name" value="2-IMINOBUTANOATE/2-IMINOPROPANOATE DEAMINASE RIDA"/>
    <property type="match status" value="1"/>
</dbReference>
<dbReference type="PANTHER" id="PTHR11803:SF53">
    <property type="entry name" value="2-IMINOBUTANOATE_2-IMINOPROPANOATE DEAMINASE"/>
    <property type="match status" value="1"/>
</dbReference>
<dbReference type="Pfam" id="PF01042">
    <property type="entry name" value="Ribonuc_L-PSP"/>
    <property type="match status" value="1"/>
</dbReference>
<dbReference type="SUPFAM" id="SSF55298">
    <property type="entry name" value="YjgF-like"/>
    <property type="match status" value="1"/>
</dbReference>
<dbReference type="PROSITE" id="PS01094">
    <property type="entry name" value="UPF0076"/>
    <property type="match status" value="1"/>
</dbReference>
<name>RIDA_CAPHI</name>
<organism>
    <name type="scientific">Capra hircus</name>
    <name type="common">Goat</name>
    <dbReference type="NCBI Taxonomy" id="9925"/>
    <lineage>
        <taxon>Eukaryota</taxon>
        <taxon>Metazoa</taxon>
        <taxon>Chordata</taxon>
        <taxon>Craniata</taxon>
        <taxon>Vertebrata</taxon>
        <taxon>Euteleostomi</taxon>
        <taxon>Mammalia</taxon>
        <taxon>Eutheria</taxon>
        <taxon>Laurasiatheria</taxon>
        <taxon>Artiodactyla</taxon>
        <taxon>Ruminantia</taxon>
        <taxon>Pecora</taxon>
        <taxon>Bovidae</taxon>
        <taxon>Caprinae</taxon>
        <taxon>Capra</taxon>
    </lineage>
</organism>
<keyword id="KW-0002">3D-structure</keyword>
<keyword id="KW-0007">Acetylation</keyword>
<keyword id="KW-0963">Cytoplasm</keyword>
<keyword id="KW-0903">Direct protein sequencing</keyword>
<keyword id="KW-0378">Hydrolase</keyword>
<keyword id="KW-0443">Lipid metabolism</keyword>
<keyword id="KW-0496">Mitochondrion</keyword>
<keyword id="KW-0539">Nucleus</keyword>
<keyword id="KW-0576">Peroxisome</keyword>
<keyword id="KW-0597">Phosphoprotein</keyword>
<keyword id="KW-1185">Reference proteome</keyword>
<keyword id="KW-0694">RNA-binding</keyword>
<feature type="initiator methionine" description="Removed" evidence="5">
    <location>
        <position position="1"/>
    </location>
</feature>
<feature type="chain" id="PRO_0000170307" description="2-iminobutanoate/2-iminopropanoate deaminase">
    <location>
        <begin position="2"/>
        <end position="137"/>
    </location>
</feature>
<feature type="modified residue" description="N-acetylserine" evidence="5">
    <location>
        <position position="2"/>
    </location>
</feature>
<feature type="modified residue" description="N6-succinyllysine" evidence="3">
    <location>
        <position position="13"/>
    </location>
</feature>
<feature type="modified residue" description="N6-succinyllysine" evidence="3">
    <location>
        <position position="67"/>
    </location>
</feature>
<feature type="modified residue" description="Phosphothreonine" evidence="1">
    <location>
        <position position="74"/>
    </location>
</feature>
<feature type="modified residue" description="Phosphoserine" evidence="1">
    <location>
        <position position="136"/>
    </location>
</feature>
<feature type="sequence conflict" description="In Ref. 1; AA sequence." evidence="7" ref="1">
    <original>SLVRRIIST</original>
    <variation>ENSEEPVGE</variation>
    <location>
        <begin position="3"/>
        <end position="11"/>
    </location>
</feature>
<feature type="sequence conflict" description="In Ref. 1; AA sequence." evidence="7" ref="1">
    <original>L</original>
    <variation>V</variation>
    <location>
        <position position="137"/>
    </location>
</feature>
<feature type="strand" evidence="11">
    <location>
        <begin position="6"/>
        <end position="9"/>
    </location>
</feature>
<feature type="strand" evidence="11">
    <location>
        <begin position="18"/>
        <end position="20"/>
    </location>
</feature>
<feature type="strand" evidence="11">
    <location>
        <begin position="23"/>
        <end position="27"/>
    </location>
</feature>
<feature type="strand" evidence="11">
    <location>
        <begin position="30"/>
        <end position="39"/>
    </location>
</feature>
<feature type="turn" evidence="11">
    <location>
        <begin position="41"/>
        <end position="43"/>
    </location>
</feature>
<feature type="strand" evidence="12">
    <location>
        <begin position="44"/>
        <end position="46"/>
    </location>
</feature>
<feature type="helix" evidence="11">
    <location>
        <begin position="50"/>
        <end position="68"/>
    </location>
</feature>
<feature type="helix" evidence="11">
    <location>
        <begin position="73"/>
        <end position="75"/>
    </location>
</feature>
<feature type="strand" evidence="11">
    <location>
        <begin position="76"/>
        <end position="84"/>
    </location>
</feature>
<feature type="helix" evidence="11">
    <location>
        <begin position="86"/>
        <end position="88"/>
    </location>
</feature>
<feature type="helix" evidence="11">
    <location>
        <begin position="89"/>
        <end position="99"/>
    </location>
</feature>
<feature type="strand" evidence="10">
    <location>
        <begin position="101"/>
        <end position="103"/>
    </location>
</feature>
<feature type="strand" evidence="11">
    <location>
        <begin position="106"/>
        <end position="111"/>
    </location>
</feature>
<feature type="helix" evidence="11">
    <location>
        <begin position="116"/>
        <end position="118"/>
    </location>
</feature>
<feature type="strand" evidence="11">
    <location>
        <begin position="120"/>
        <end position="128"/>
    </location>
</feature>
<feature type="strand" evidence="9">
    <location>
        <begin position="132"/>
        <end position="134"/>
    </location>
</feature>
<gene>
    <name evidence="1" type="primary">RIDA</name>
</gene>
<reference key="1">
    <citation type="journal article" date="1996" name="FEBS Lett.">
        <title>The primary structure of UK114 tumor antigen.</title>
        <authorList>
            <person name="Ceciliani F."/>
            <person name="Faotto L."/>
            <person name="Negri A."/>
            <person name="Colombo I."/>
            <person name="Berra B."/>
            <person name="Bartorelli A."/>
            <person name="Ronchi S."/>
        </authorList>
    </citation>
    <scope>PRELIMINARY PROTEIN SEQUENCE OF 2-137</scope>
    <scope>IDENTIFICATION BY MASS SPECTROMETRY</scope>
    <source>
        <tissue>Liver</tissue>
    </source>
</reference>
<reference key="2">
    <citation type="journal article" date="1998" name="Biochim. Biophys. Acta">
        <title>cDNA cloning and Escherichia coli expression of UK114 tumor antigen.</title>
        <authorList>
            <person name="Colombo I."/>
            <person name="Ceciliani F."/>
            <person name="Ronchi S."/>
            <person name="Bartorelli A."/>
            <person name="Berra B."/>
        </authorList>
    </citation>
    <scope>NUCLEOTIDE SEQUENCE [MRNA]</scope>
    <scope>ACETYLATION AT SER-2</scope>
    <scope>MASS SPECTROMETRY</scope>
    <source>
        <tissue>Liver</tissue>
    </source>
</reference>
<reference key="3">
    <citation type="journal article" date="2003" name="Acta Crystallogr. D">
        <title>Structure and oligomeric state of the mammalian tumour-associated antigen UK114.</title>
        <authorList>
            <person name="Deriu D."/>
            <person name="Briand C."/>
            <person name="Mistiniene E."/>
            <person name="Naktinis V."/>
            <person name="Grutter M.G."/>
        </authorList>
    </citation>
    <scope>X-RAY CRYSTALLOGRAPHY (2.2 ANGSTROMS) OF 12-135</scope>
    <scope>SUBUNIT</scope>
</reference>
<evidence type="ECO:0000250" key="1">
    <source>
        <dbReference type="UniProtKB" id="P52758"/>
    </source>
</evidence>
<evidence type="ECO:0000250" key="2">
    <source>
        <dbReference type="UniProtKB" id="P52759"/>
    </source>
</evidence>
<evidence type="ECO:0000250" key="3">
    <source>
        <dbReference type="UniProtKB" id="P52760"/>
    </source>
</evidence>
<evidence type="ECO:0000269" key="4">
    <source>
    </source>
</evidence>
<evidence type="ECO:0000269" key="5">
    <source>
    </source>
</evidence>
<evidence type="ECO:0000303" key="6">
    <source>
    </source>
</evidence>
<evidence type="ECO:0000305" key="7"/>
<evidence type="ECO:0000312" key="8">
    <source>
        <dbReference type="EMBL" id="AAC72281.1"/>
    </source>
</evidence>
<evidence type="ECO:0007829" key="9">
    <source>
        <dbReference type="PDB" id="1NQ3"/>
    </source>
</evidence>
<evidence type="ECO:0007829" key="10">
    <source>
        <dbReference type="PDB" id="8Q3H"/>
    </source>
</evidence>
<evidence type="ECO:0007829" key="11">
    <source>
        <dbReference type="PDB" id="8QOK"/>
    </source>
</evidence>
<evidence type="ECO:0007829" key="12">
    <source>
        <dbReference type="PDB" id="8QOV"/>
    </source>
</evidence>
<comment type="function">
    <text evidence="1">Catalyzes the hydrolytic deamination of enamine/imine intermediates that form during the course of normal metabolism. May facilitate the release of ammonia from these potentially toxic reactive metabolites, reducing their impact on cellular components. It may act on enamine/imine intermediates formed by several types of pyridoxal-5'-phosphate-dependent dehydratases including L-threonine dehydratase.</text>
</comment>
<comment type="function">
    <text evidence="1">Also promotes endoribonucleolytic cleavage of some transcripts by promoting recruitment of the ribonuclease P/MRP complex. Acts by bridging YTHDF2 and the ribonuclease P/MRP complex. RIDA/HRSP12 binds to N6-methyladenosine (m6A)-containing mRNAs containing a 5'-GGUUC-3' motif: cooperative binding of RIDA/HRSP12 and YTHDF2 to such transcripts lead to recruitment of the ribonuclease P/MRP complex and subsequent endoribonucleolytic cleavage.</text>
</comment>
<comment type="catalytic activity">
    <reaction evidence="1">
        <text>2-iminobutanoate + H2O = 2-oxobutanoate + NH4(+)</text>
        <dbReference type="Rhea" id="RHEA:39975"/>
        <dbReference type="ChEBI" id="CHEBI:15377"/>
        <dbReference type="ChEBI" id="CHEBI:16763"/>
        <dbReference type="ChEBI" id="CHEBI:28938"/>
        <dbReference type="ChEBI" id="CHEBI:76545"/>
        <dbReference type="EC" id="3.5.99.10"/>
    </reaction>
</comment>
<comment type="catalytic activity">
    <reaction evidence="1">
        <text>2-iminopropanoate + H2O = pyruvate + NH4(+)</text>
        <dbReference type="Rhea" id="RHEA:40671"/>
        <dbReference type="ChEBI" id="CHEBI:15361"/>
        <dbReference type="ChEBI" id="CHEBI:15377"/>
        <dbReference type="ChEBI" id="CHEBI:28938"/>
        <dbReference type="ChEBI" id="CHEBI:44400"/>
        <dbReference type="EC" id="3.5.99.10"/>
    </reaction>
</comment>
<comment type="subunit">
    <text evidence="1 4">Homotrimer (PubMed:12925811). Interacts with YTHDF2 (By similarity).</text>
</comment>
<comment type="subcellular location">
    <subcellularLocation>
        <location evidence="1">Cytoplasm</location>
    </subcellularLocation>
    <subcellularLocation>
        <location evidence="1">Nucleus</location>
    </subcellularLocation>
    <subcellularLocation>
        <location evidence="2">Peroxisome</location>
    </subcellularLocation>
    <subcellularLocation>
        <location evidence="2">Mitochondrion</location>
    </subcellularLocation>
    <text evidence="1">Mostly cytoplasmic but, in less differentiated cells occasionally nuclear.</text>
</comment>
<comment type="tissue specificity">
    <text>Expressed by various malignant neoplasms.</text>
</comment>
<comment type="mass spectrometry"/>
<comment type="similarity">
    <text evidence="7">Belongs to the RutC family.</text>
</comment>